<gene>
    <name type="primary">POP8</name>
    <name type="ordered locus">YBL018C</name>
    <name type="ORF">YBL0301</name>
</gene>
<accession>P38208</accession>
<accession>D6VPY2</accession>
<proteinExistence type="evidence at protein level"/>
<sequence>MGKKTFREWQYFKLSITSFDQDVDDAHAIDQMTWRQWLNNALKRSYGIFGEGVEYSFLHVDDKLAYIRVNHADKDTFSSSISTYISTDELVGSPLTVSILQESSSLRLLEVTDDDRLWLKKVMEEEEQDCKCI</sequence>
<evidence type="ECO:0000269" key="1">
    <source>
    </source>
</evidence>
<evidence type="ECO:0000269" key="2">
    <source>
    </source>
</evidence>
<evidence type="ECO:0000269" key="3">
    <source>
    </source>
</evidence>
<evidence type="ECO:0000269" key="4">
    <source>
    </source>
</evidence>
<evidence type="ECO:0007829" key="5">
    <source>
        <dbReference type="PDB" id="7C79"/>
    </source>
</evidence>
<name>POP8_YEAST</name>
<feature type="chain" id="PRO_0000058521" description="Ribonucleases P/MRP protein subunit POP8">
    <location>
        <begin position="1"/>
        <end position="133"/>
    </location>
</feature>
<feature type="strand" evidence="5">
    <location>
        <begin position="9"/>
        <end position="14"/>
    </location>
</feature>
<feature type="helix" evidence="5">
    <location>
        <begin position="21"/>
        <end position="24"/>
    </location>
</feature>
<feature type="helix" evidence="5">
    <location>
        <begin position="31"/>
        <end position="45"/>
    </location>
</feature>
<feature type="helix" evidence="5">
    <location>
        <begin position="48"/>
        <end position="51"/>
    </location>
</feature>
<feature type="strand" evidence="5">
    <location>
        <begin position="55"/>
        <end position="61"/>
    </location>
</feature>
<feature type="strand" evidence="5">
    <location>
        <begin position="64"/>
        <end position="70"/>
    </location>
</feature>
<feature type="helix" evidence="5">
    <location>
        <begin position="71"/>
        <end position="73"/>
    </location>
</feature>
<feature type="helix" evidence="5">
    <location>
        <begin position="74"/>
        <end position="81"/>
    </location>
</feature>
<feature type="strand" evidence="5">
    <location>
        <begin position="88"/>
        <end position="93"/>
    </location>
</feature>
<feature type="strand" evidence="5">
    <location>
        <begin position="102"/>
        <end position="106"/>
    </location>
</feature>
<feature type="helix" evidence="5">
    <location>
        <begin position="115"/>
        <end position="132"/>
    </location>
</feature>
<dbReference type="EC" id="3.1.26.5"/>
<dbReference type="EMBL" id="Z35779">
    <property type="protein sequence ID" value="CAA84837.1"/>
    <property type="molecule type" value="Genomic_DNA"/>
</dbReference>
<dbReference type="EMBL" id="BK006936">
    <property type="protein sequence ID" value="DAA07102.1"/>
    <property type="molecule type" value="Genomic_DNA"/>
</dbReference>
<dbReference type="PIR" id="S45752">
    <property type="entry name" value="S45752"/>
</dbReference>
<dbReference type="RefSeq" id="NP_009535.1">
    <property type="nucleotide sequence ID" value="NM_001178258.1"/>
</dbReference>
<dbReference type="PDB" id="6AGB">
    <property type="method" value="EM"/>
    <property type="resolution" value="3.48 A"/>
    <property type="chains" value="H=1-133"/>
</dbReference>
<dbReference type="PDB" id="6AH3">
    <property type="method" value="EM"/>
    <property type="resolution" value="3.48 A"/>
    <property type="chains" value="H=1-133"/>
</dbReference>
<dbReference type="PDB" id="6W6V">
    <property type="method" value="EM"/>
    <property type="resolution" value="3.00 A"/>
    <property type="chains" value="H=1-133"/>
</dbReference>
<dbReference type="PDB" id="7C79">
    <property type="method" value="EM"/>
    <property type="resolution" value="2.50 A"/>
    <property type="chains" value="H=1-133"/>
</dbReference>
<dbReference type="PDB" id="7C7A">
    <property type="method" value="EM"/>
    <property type="resolution" value="2.80 A"/>
    <property type="chains" value="H=1-133"/>
</dbReference>
<dbReference type="PDBsum" id="6AGB"/>
<dbReference type="PDBsum" id="6AH3"/>
<dbReference type="PDBsum" id="6W6V"/>
<dbReference type="PDBsum" id="7C79"/>
<dbReference type="PDBsum" id="7C7A"/>
<dbReference type="EMDB" id="EMD-21564"/>
<dbReference type="EMDB" id="EMD-30296"/>
<dbReference type="EMDB" id="EMD-30297"/>
<dbReference type="EMDB" id="EMD-9616"/>
<dbReference type="EMDB" id="EMD-9622"/>
<dbReference type="SMR" id="P38208"/>
<dbReference type="BioGRID" id="32680">
    <property type="interactions" value="120"/>
</dbReference>
<dbReference type="ComplexPortal" id="CPX-1873">
    <property type="entry name" value="Nucleolar ribonuclease P complex"/>
</dbReference>
<dbReference type="ComplexPortal" id="CPX-3284">
    <property type="entry name" value="Nucleolar ribonuclease MRP complex"/>
</dbReference>
<dbReference type="DIP" id="DIP-2033N"/>
<dbReference type="FunCoup" id="P38208">
    <property type="interactions" value="142"/>
</dbReference>
<dbReference type="IntAct" id="P38208">
    <property type="interactions" value="12"/>
</dbReference>
<dbReference type="STRING" id="4932.YBL018C"/>
<dbReference type="iPTMnet" id="P38208"/>
<dbReference type="PaxDb" id="4932-YBL018C"/>
<dbReference type="PeptideAtlas" id="P38208"/>
<dbReference type="EnsemblFungi" id="YBL018C_mRNA">
    <property type="protein sequence ID" value="YBL018C"/>
    <property type="gene ID" value="YBL018C"/>
</dbReference>
<dbReference type="GeneID" id="852263"/>
<dbReference type="KEGG" id="sce:YBL018C"/>
<dbReference type="AGR" id="SGD:S000000114"/>
<dbReference type="SGD" id="S000000114">
    <property type="gene designation" value="POP8"/>
</dbReference>
<dbReference type="VEuPathDB" id="FungiDB:YBL018C"/>
<dbReference type="eggNOG" id="ENOG502SCWV">
    <property type="taxonomic scope" value="Eukaryota"/>
</dbReference>
<dbReference type="HOGENOM" id="CLU_153352_0_0_1"/>
<dbReference type="InParanoid" id="P38208"/>
<dbReference type="OMA" id="WLKKVME"/>
<dbReference type="OrthoDB" id="4056858at2759"/>
<dbReference type="BioCyc" id="YEAST:YBL018C-MONOMER"/>
<dbReference type="BioGRID-ORCS" id="852263">
    <property type="hits" value="3 hits in 10 CRISPR screens"/>
</dbReference>
<dbReference type="CD-CODE" id="7CAF9006">
    <property type="entry name" value="Tam body"/>
</dbReference>
<dbReference type="PRO" id="PR:P38208"/>
<dbReference type="Proteomes" id="UP000002311">
    <property type="component" value="Chromosome II"/>
</dbReference>
<dbReference type="RNAct" id="P38208">
    <property type="molecule type" value="protein"/>
</dbReference>
<dbReference type="GO" id="GO:0005829">
    <property type="term" value="C:cytosol"/>
    <property type="evidence" value="ECO:0000314"/>
    <property type="project" value="SGD"/>
</dbReference>
<dbReference type="GO" id="GO:0005655">
    <property type="term" value="C:nucleolar ribonuclease P complex"/>
    <property type="evidence" value="ECO:0000314"/>
    <property type="project" value="SGD"/>
</dbReference>
<dbReference type="GO" id="GO:0005634">
    <property type="term" value="C:nucleus"/>
    <property type="evidence" value="ECO:0000314"/>
    <property type="project" value="SGD"/>
</dbReference>
<dbReference type="GO" id="GO:0000172">
    <property type="term" value="C:ribonuclease MRP complex"/>
    <property type="evidence" value="ECO:0000314"/>
    <property type="project" value="SGD"/>
</dbReference>
<dbReference type="GO" id="GO:0004526">
    <property type="term" value="F:ribonuclease P activity"/>
    <property type="evidence" value="ECO:0007669"/>
    <property type="project" value="UniProtKB-EC"/>
</dbReference>
<dbReference type="GO" id="GO:0034965">
    <property type="term" value="P:intronic box C/D snoRNA processing"/>
    <property type="evidence" value="ECO:0000314"/>
    <property type="project" value="SGD"/>
</dbReference>
<dbReference type="GO" id="GO:0000460">
    <property type="term" value="P:maturation of 5.8S rRNA"/>
    <property type="evidence" value="ECO:0000314"/>
    <property type="project" value="ComplexPortal"/>
</dbReference>
<dbReference type="GO" id="GO:0000294">
    <property type="term" value="P:nuclear-transcribed mRNA catabolic process, RNase MRP-dependent"/>
    <property type="evidence" value="ECO:0000314"/>
    <property type="project" value="SGD"/>
</dbReference>
<dbReference type="GO" id="GO:0001682">
    <property type="term" value="P:tRNA 5'-leader removal"/>
    <property type="evidence" value="ECO:0000314"/>
    <property type="project" value="ComplexPortal"/>
</dbReference>
<dbReference type="GO" id="GO:0008033">
    <property type="term" value="P:tRNA processing"/>
    <property type="evidence" value="ECO:0000315"/>
    <property type="project" value="SGD"/>
</dbReference>
<dbReference type="InterPro" id="IPR020347">
    <property type="entry name" value="Pop8"/>
</dbReference>
<dbReference type="InterPro" id="IPR049128">
    <property type="entry name" value="Pop8-like_dom"/>
</dbReference>
<dbReference type="PANTHER" id="PTHR28173">
    <property type="entry name" value="RIBONUCLEASES P/MRP PROTEIN SUBUNIT POP8"/>
    <property type="match status" value="1"/>
</dbReference>
<dbReference type="PANTHER" id="PTHR28173:SF1">
    <property type="entry name" value="RIBONUCLEASES P_MRP PROTEIN SUBUNIT POP8"/>
    <property type="match status" value="1"/>
</dbReference>
<dbReference type="Pfam" id="PF20976">
    <property type="entry name" value="Pop8"/>
    <property type="match status" value="1"/>
</dbReference>
<reference key="1">
    <citation type="journal article" date="1994" name="EMBO J.">
        <title>Complete DNA sequence of yeast chromosome II.</title>
        <authorList>
            <person name="Feldmann H."/>
            <person name="Aigle M."/>
            <person name="Aljinovic G."/>
            <person name="Andre B."/>
            <person name="Baclet M.C."/>
            <person name="Barthe C."/>
            <person name="Baur A."/>
            <person name="Becam A.-M."/>
            <person name="Biteau N."/>
            <person name="Boles E."/>
            <person name="Brandt T."/>
            <person name="Brendel M."/>
            <person name="Brueckner M."/>
            <person name="Bussereau F."/>
            <person name="Christiansen C."/>
            <person name="Contreras R."/>
            <person name="Crouzet M."/>
            <person name="Cziepluch C."/>
            <person name="Demolis N."/>
            <person name="Delaveau T."/>
            <person name="Doignon F."/>
            <person name="Domdey H."/>
            <person name="Duesterhus S."/>
            <person name="Dubois E."/>
            <person name="Dujon B."/>
            <person name="El Bakkoury M."/>
            <person name="Entian K.-D."/>
            <person name="Feuermann M."/>
            <person name="Fiers W."/>
            <person name="Fobo G.M."/>
            <person name="Fritz C."/>
            <person name="Gassenhuber J."/>
            <person name="Glansdorff N."/>
            <person name="Goffeau A."/>
            <person name="Grivell L.A."/>
            <person name="de Haan M."/>
            <person name="Hein C."/>
            <person name="Herbert C.J."/>
            <person name="Hollenberg C.P."/>
            <person name="Holmstroem K."/>
            <person name="Jacq C."/>
            <person name="Jacquet M."/>
            <person name="Jauniaux J.-C."/>
            <person name="Jonniaux J.-L."/>
            <person name="Kallesoee T."/>
            <person name="Kiesau P."/>
            <person name="Kirchrath L."/>
            <person name="Koetter P."/>
            <person name="Korol S."/>
            <person name="Liebl S."/>
            <person name="Logghe M."/>
            <person name="Lohan A.J.E."/>
            <person name="Louis E.J."/>
            <person name="Li Z.Y."/>
            <person name="Maat M.J."/>
            <person name="Mallet L."/>
            <person name="Mannhaupt G."/>
            <person name="Messenguy F."/>
            <person name="Miosga T."/>
            <person name="Molemans F."/>
            <person name="Mueller S."/>
            <person name="Nasr F."/>
            <person name="Obermaier B."/>
            <person name="Perea J."/>
            <person name="Pierard A."/>
            <person name="Piravandi E."/>
            <person name="Pohl F.M."/>
            <person name="Pohl T.M."/>
            <person name="Potier S."/>
            <person name="Proft M."/>
            <person name="Purnelle B."/>
            <person name="Ramezani Rad M."/>
            <person name="Rieger M."/>
            <person name="Rose M."/>
            <person name="Schaaff-Gerstenschlaeger I."/>
            <person name="Scherens B."/>
            <person name="Schwarzlose C."/>
            <person name="Skala J."/>
            <person name="Slonimski P.P."/>
            <person name="Smits P.H.M."/>
            <person name="Souciet J.-L."/>
            <person name="Steensma H.Y."/>
            <person name="Stucka R."/>
            <person name="Urrestarazu L.A."/>
            <person name="van der Aart Q.J.M."/>
            <person name="Van Dyck L."/>
            <person name="Vassarotti A."/>
            <person name="Vetter I."/>
            <person name="Vierendeels F."/>
            <person name="Vissers S."/>
            <person name="Wagner G."/>
            <person name="de Wergifosse P."/>
            <person name="Wolfe K.H."/>
            <person name="Zagulski M."/>
            <person name="Zimmermann F.K."/>
            <person name="Mewes H.-W."/>
            <person name="Kleine K."/>
        </authorList>
    </citation>
    <scope>NUCLEOTIDE SEQUENCE [LARGE SCALE GENOMIC DNA]</scope>
    <source>
        <strain>ATCC 204508 / S288c</strain>
    </source>
</reference>
<reference key="2">
    <citation type="journal article" date="2014" name="G3 (Bethesda)">
        <title>The reference genome sequence of Saccharomyces cerevisiae: Then and now.</title>
        <authorList>
            <person name="Engel S.R."/>
            <person name="Dietrich F.S."/>
            <person name="Fisk D.G."/>
            <person name="Binkley G."/>
            <person name="Balakrishnan R."/>
            <person name="Costanzo M.C."/>
            <person name="Dwight S.S."/>
            <person name="Hitz B.C."/>
            <person name="Karra K."/>
            <person name="Nash R.S."/>
            <person name="Weng S."/>
            <person name="Wong E.D."/>
            <person name="Lloyd P."/>
            <person name="Skrzypek M.S."/>
            <person name="Miyasato S.R."/>
            <person name="Simison M."/>
            <person name="Cherry J.M."/>
        </authorList>
    </citation>
    <scope>GENOME REANNOTATION</scope>
    <source>
        <strain>ATCC 204508 / S288c</strain>
    </source>
</reference>
<reference key="3">
    <citation type="journal article" date="1998" name="Genes Dev.">
        <title>Purification and characterization of the nuclear RNase P holoenzyme complex reveals extensive subunit overlap with RNase MRP.</title>
        <authorList>
            <person name="Chamberlain J.R."/>
            <person name="Lee Y."/>
            <person name="Lane W.S."/>
            <person name="Engelke D.R."/>
        </authorList>
    </citation>
    <scope>FUNCTION</scope>
    <scope>IDENTIFICATION IN THE RNASE P COMPLEX BY MASS SPECTROMETRY</scope>
</reference>
<reference key="4">
    <citation type="journal article" date="2003" name="Mol. Cell">
        <title>Assigning function to yeast proteins by integration of technologies.</title>
        <authorList>
            <person name="Hazbun T.R."/>
            <person name="Malmstroem L."/>
            <person name="Anderson S."/>
            <person name="Graczyk B.J."/>
            <person name="Fox B."/>
            <person name="Riffle M."/>
            <person name="Sundin B.A."/>
            <person name="Aranda J.D."/>
            <person name="McDonald W.H."/>
            <person name="Chiu C.-H."/>
            <person name="Snydsman B.E."/>
            <person name="Bradley P."/>
            <person name="Muller E.G.D."/>
            <person name="Fields S."/>
            <person name="Baker D."/>
            <person name="Yates J.R. III"/>
            <person name="Davis T.N."/>
        </authorList>
    </citation>
    <scope>IDENTIFICATION BY MASS SPECTROMETRY</scope>
</reference>
<reference key="5">
    <citation type="journal article" date="2003" name="Nature">
        <title>Global analysis of protein localization in budding yeast.</title>
        <authorList>
            <person name="Huh W.-K."/>
            <person name="Falvo J.V."/>
            <person name="Gerke L.C."/>
            <person name="Carroll A.S."/>
            <person name="Howson R.W."/>
            <person name="Weissman J.S."/>
            <person name="O'Shea E.K."/>
        </authorList>
    </citation>
    <scope>SUBCELLULAR LOCATION [LARGE SCALE ANALYSIS]</scope>
</reference>
<reference key="6">
    <citation type="journal article" date="2003" name="Nature">
        <title>Global analysis of protein expression in yeast.</title>
        <authorList>
            <person name="Ghaemmaghami S."/>
            <person name="Huh W.-K."/>
            <person name="Bower K."/>
            <person name="Howson R.W."/>
            <person name="Belle A."/>
            <person name="Dephoure N."/>
            <person name="O'Shea E.K."/>
            <person name="Weissman J.S."/>
        </authorList>
    </citation>
    <scope>LEVEL OF PROTEIN EXPRESSION [LARGE SCALE ANALYSIS]</scope>
</reference>
<reference key="7">
    <citation type="journal article" date="2005" name="J. Biol. Chem.">
        <title>Characterization and purification of Saccharomyces cerevisiae RNase MRP reveals a new unique protein component.</title>
        <authorList>
            <person name="Salinas K."/>
            <person name="Wierzbicki S."/>
            <person name="Zhou L."/>
            <person name="Schmitt M.E."/>
        </authorList>
    </citation>
    <scope>IDENTIFICATION IN THE RNASE MRP COMPLEX BY MASS SPECTROMETRY</scope>
</reference>
<protein>
    <recommendedName>
        <fullName>Ribonucleases P/MRP protein subunit POP8</fullName>
        <ecNumber>3.1.26.5</ecNumber>
    </recommendedName>
    <alternativeName>
        <fullName>RNA-processing protein POP8</fullName>
    </alternativeName>
    <alternativeName>
        <fullName>RNases P/MRP 15.5 kDa subunit</fullName>
    </alternativeName>
</protein>
<organism>
    <name type="scientific">Saccharomyces cerevisiae (strain ATCC 204508 / S288c)</name>
    <name type="common">Baker's yeast</name>
    <dbReference type="NCBI Taxonomy" id="559292"/>
    <lineage>
        <taxon>Eukaryota</taxon>
        <taxon>Fungi</taxon>
        <taxon>Dikarya</taxon>
        <taxon>Ascomycota</taxon>
        <taxon>Saccharomycotina</taxon>
        <taxon>Saccharomycetes</taxon>
        <taxon>Saccharomycetales</taxon>
        <taxon>Saccharomycetaceae</taxon>
        <taxon>Saccharomyces</taxon>
    </lineage>
</organism>
<comment type="function">
    <text evidence="4">Component of ribonuclease P, a protein complex that generates mature tRNA molecules by cleaving their 5'-ends. Also a component of RNase MRP, which cleaves pre-rRNA sequences.</text>
</comment>
<comment type="catalytic activity">
    <reaction>
        <text>Endonucleolytic cleavage of RNA, removing 5'-extranucleotides from tRNA precursor.</text>
        <dbReference type="EC" id="3.1.26.5"/>
    </reaction>
</comment>
<comment type="subunit">
    <text evidence="3 4">Component of nuclear RNase P and RNase MRP complexes. RNase P consists of an RNA moiety and at least 9 protein subunits including POP1, POP3, POP4, POP5, POP6, POP7, POP8, RPP1 and RPR2. RNase MRP complex consists of an RNA moiety and at least 10 protein subunits including POP1, POP3, POP4, POP5, POP6, POP7, POP8, RMP1, RPP1 and SNM1, many of which are shared with the RNase P complex.</text>
</comment>
<comment type="subcellular location">
    <subcellularLocation>
        <location evidence="1">Nucleus</location>
    </subcellularLocation>
</comment>
<comment type="miscellaneous">
    <text evidence="2">Present with 4870 molecules/cell in log phase SD medium.</text>
</comment>
<keyword id="KW-0002">3D-structure</keyword>
<keyword id="KW-0378">Hydrolase</keyword>
<keyword id="KW-0539">Nucleus</keyword>
<keyword id="KW-1185">Reference proteome</keyword>
<keyword id="KW-0698">rRNA processing</keyword>
<keyword id="KW-0819">tRNA processing</keyword>